<reference key="1">
    <citation type="journal article" date="2004" name="Gene">
        <title>TAIL1: an isthmin-like gene, containing type 1 thrombospondin-repeat and AMOP domain, mapped to ARVD1 critical region.</title>
        <authorList>
            <person name="Rossi V."/>
            <person name="Beffagna G."/>
            <person name="Rampazzo A."/>
            <person name="Bauce B."/>
            <person name="Danieli G.A."/>
        </authorList>
    </citation>
    <scope>NUCLEOTIDE SEQUENCE [MRNA] (ISOFORMS 1; 3; 4 AND 5)</scope>
    <scope>TISSUE SPECIFICITY</scope>
    <source>
        <tissue>Heart</tissue>
    </source>
</reference>
<reference key="2">
    <citation type="submission" date="2003-02" db="EMBL/GenBank/DDBJ databases">
        <title>Full-length cDNA libraries and normalization.</title>
        <authorList>
            <person name="Li W.B."/>
            <person name="Gruber C."/>
            <person name="Jessee J."/>
            <person name="Polayes D."/>
        </authorList>
    </citation>
    <scope>NUCLEOTIDE SEQUENCE [LARGE SCALE MRNA] (ISOFORM 2)</scope>
    <scope>NUCLEOTIDE SEQUENCE [LARGE SCALE MRNA] OF 1-461 (ISOFORM 1)</scope>
    <source>
        <tissue>Placenta</tissue>
    </source>
</reference>
<reference key="3">
    <citation type="journal article" date="2005" name="DNA Res.">
        <title>Signal sequence and keyword trap in silico for selection of full-length human cDNAs encoding secretion or membrane proteins from oligo-capped cDNA libraries.</title>
        <authorList>
            <person name="Otsuki T."/>
            <person name="Ota T."/>
            <person name="Nishikawa T."/>
            <person name="Hayashi K."/>
            <person name="Suzuki Y."/>
            <person name="Yamamoto J."/>
            <person name="Wakamatsu A."/>
            <person name="Kimura K."/>
            <person name="Sakamoto K."/>
            <person name="Hatano N."/>
            <person name="Kawai Y."/>
            <person name="Ishii S."/>
            <person name="Saito K."/>
            <person name="Kojima S."/>
            <person name="Sugiyama T."/>
            <person name="Ono T."/>
            <person name="Okano K."/>
            <person name="Yoshikawa Y."/>
            <person name="Aotsuka S."/>
            <person name="Sasaki N."/>
            <person name="Hattori A."/>
            <person name="Okumura K."/>
            <person name="Nagai K."/>
            <person name="Sugano S."/>
            <person name="Isogai T."/>
        </authorList>
    </citation>
    <scope>NUCLEOTIDE SEQUENCE [LARGE SCALE MRNA] (ISOFORM 1)</scope>
    <scope>VARIANT THR-94</scope>
</reference>
<reference key="4">
    <citation type="journal article" date="2004" name="Nat. Genet.">
        <title>Complete sequencing and characterization of 21,243 full-length human cDNAs.</title>
        <authorList>
            <person name="Ota T."/>
            <person name="Suzuki Y."/>
            <person name="Nishikawa T."/>
            <person name="Otsuki T."/>
            <person name="Sugiyama T."/>
            <person name="Irie R."/>
            <person name="Wakamatsu A."/>
            <person name="Hayashi K."/>
            <person name="Sato H."/>
            <person name="Nagai K."/>
            <person name="Kimura K."/>
            <person name="Makita H."/>
            <person name="Sekine M."/>
            <person name="Obayashi M."/>
            <person name="Nishi T."/>
            <person name="Shibahara T."/>
            <person name="Tanaka T."/>
            <person name="Ishii S."/>
            <person name="Yamamoto J."/>
            <person name="Saito K."/>
            <person name="Kawai Y."/>
            <person name="Isono Y."/>
            <person name="Nakamura Y."/>
            <person name="Nagahari K."/>
            <person name="Murakami K."/>
            <person name="Yasuda T."/>
            <person name="Iwayanagi T."/>
            <person name="Wagatsuma M."/>
            <person name="Shiratori A."/>
            <person name="Sudo H."/>
            <person name="Hosoiri T."/>
            <person name="Kaku Y."/>
            <person name="Kodaira H."/>
            <person name="Kondo H."/>
            <person name="Sugawara M."/>
            <person name="Takahashi M."/>
            <person name="Kanda K."/>
            <person name="Yokoi T."/>
            <person name="Furuya T."/>
            <person name="Kikkawa E."/>
            <person name="Omura Y."/>
            <person name="Abe K."/>
            <person name="Kamihara K."/>
            <person name="Katsuta N."/>
            <person name="Sato K."/>
            <person name="Tanikawa M."/>
            <person name="Yamazaki M."/>
            <person name="Ninomiya K."/>
            <person name="Ishibashi T."/>
            <person name="Yamashita H."/>
            <person name="Murakawa K."/>
            <person name="Fujimori K."/>
            <person name="Tanai H."/>
            <person name="Kimata M."/>
            <person name="Watanabe M."/>
            <person name="Hiraoka S."/>
            <person name="Chiba Y."/>
            <person name="Ishida S."/>
            <person name="Ono Y."/>
            <person name="Takiguchi S."/>
            <person name="Watanabe S."/>
            <person name="Yosida M."/>
            <person name="Hotuta T."/>
            <person name="Kusano J."/>
            <person name="Kanehori K."/>
            <person name="Takahashi-Fujii A."/>
            <person name="Hara H."/>
            <person name="Tanase T.-O."/>
            <person name="Nomura Y."/>
            <person name="Togiya S."/>
            <person name="Komai F."/>
            <person name="Hara R."/>
            <person name="Takeuchi K."/>
            <person name="Arita M."/>
            <person name="Imose N."/>
            <person name="Musashino K."/>
            <person name="Yuuki H."/>
            <person name="Oshima A."/>
            <person name="Sasaki N."/>
            <person name="Aotsuka S."/>
            <person name="Yoshikawa Y."/>
            <person name="Matsunawa H."/>
            <person name="Ichihara T."/>
            <person name="Shiohata N."/>
            <person name="Sano S."/>
            <person name="Moriya S."/>
            <person name="Momiyama H."/>
            <person name="Satoh N."/>
            <person name="Takami S."/>
            <person name="Terashima Y."/>
            <person name="Suzuki O."/>
            <person name="Nakagawa S."/>
            <person name="Senoh A."/>
            <person name="Mizoguchi H."/>
            <person name="Goto Y."/>
            <person name="Shimizu F."/>
            <person name="Wakebe H."/>
            <person name="Hishigaki H."/>
            <person name="Watanabe T."/>
            <person name="Sugiyama A."/>
            <person name="Takemoto M."/>
            <person name="Kawakami B."/>
            <person name="Yamazaki M."/>
            <person name="Watanabe K."/>
            <person name="Kumagai A."/>
            <person name="Itakura S."/>
            <person name="Fukuzumi Y."/>
            <person name="Fujimori Y."/>
            <person name="Komiyama M."/>
            <person name="Tashiro H."/>
            <person name="Tanigami A."/>
            <person name="Fujiwara T."/>
            <person name="Ono T."/>
            <person name="Yamada K."/>
            <person name="Fujii Y."/>
            <person name="Ozaki K."/>
            <person name="Hirao M."/>
            <person name="Ohmori Y."/>
            <person name="Kawabata A."/>
            <person name="Hikiji T."/>
            <person name="Kobatake N."/>
            <person name="Inagaki H."/>
            <person name="Ikema Y."/>
            <person name="Okamoto S."/>
            <person name="Okitani R."/>
            <person name="Kawakami T."/>
            <person name="Noguchi S."/>
            <person name="Itoh T."/>
            <person name="Shigeta K."/>
            <person name="Senba T."/>
            <person name="Matsumura K."/>
            <person name="Nakajima Y."/>
            <person name="Mizuno T."/>
            <person name="Morinaga M."/>
            <person name="Sasaki M."/>
            <person name="Togashi T."/>
            <person name="Oyama M."/>
            <person name="Hata H."/>
            <person name="Watanabe M."/>
            <person name="Komatsu T."/>
            <person name="Mizushima-Sugano J."/>
            <person name="Satoh T."/>
            <person name="Shirai Y."/>
            <person name="Takahashi Y."/>
            <person name="Nakagawa K."/>
            <person name="Okumura K."/>
            <person name="Nagase T."/>
            <person name="Nomura N."/>
            <person name="Kikuchi H."/>
            <person name="Masuho Y."/>
            <person name="Yamashita R."/>
            <person name="Nakai K."/>
            <person name="Yada T."/>
            <person name="Nakamura Y."/>
            <person name="Ohara O."/>
            <person name="Isogai T."/>
            <person name="Sugano S."/>
        </authorList>
    </citation>
    <scope>NUCLEOTIDE SEQUENCE [LARGE SCALE MRNA] (ISOFORM 1)</scope>
    <scope>VARIANT THR-94</scope>
    <source>
        <tissue>Placenta</tissue>
    </source>
</reference>
<reference key="5">
    <citation type="journal article" date="2007" name="BMC Genomics">
        <title>The full-ORF clone resource of the German cDNA consortium.</title>
        <authorList>
            <person name="Bechtel S."/>
            <person name="Rosenfelder H."/>
            <person name="Duda A."/>
            <person name="Schmidt C.P."/>
            <person name="Ernst U."/>
            <person name="Wellenreuther R."/>
            <person name="Mehrle A."/>
            <person name="Schuster C."/>
            <person name="Bahr A."/>
            <person name="Bloecker H."/>
            <person name="Heubner D."/>
            <person name="Hoerlein A."/>
            <person name="Michel G."/>
            <person name="Wedler H."/>
            <person name="Koehrer K."/>
            <person name="Ottenwaelder B."/>
            <person name="Poustka A."/>
            <person name="Wiemann S."/>
            <person name="Schupp I."/>
        </authorList>
    </citation>
    <scope>NUCLEOTIDE SEQUENCE [LARGE SCALE MRNA] (ISOFORM 1)</scope>
    <scope>VARIANT THR-94</scope>
    <source>
        <tissue>Cervix</tissue>
    </source>
</reference>
<reference key="6">
    <citation type="journal article" date="2003" name="Nature">
        <title>The DNA sequence and analysis of human chromosome 14.</title>
        <authorList>
            <person name="Heilig R."/>
            <person name="Eckenberg R."/>
            <person name="Petit J.-L."/>
            <person name="Fonknechten N."/>
            <person name="Da Silva C."/>
            <person name="Cattolico L."/>
            <person name="Levy M."/>
            <person name="Barbe V."/>
            <person name="De Berardinis V."/>
            <person name="Ureta-Vidal A."/>
            <person name="Pelletier E."/>
            <person name="Vico V."/>
            <person name="Anthouard V."/>
            <person name="Rowen L."/>
            <person name="Madan A."/>
            <person name="Qin S."/>
            <person name="Sun H."/>
            <person name="Du H."/>
            <person name="Pepin K."/>
            <person name="Artiguenave F."/>
            <person name="Robert C."/>
            <person name="Cruaud C."/>
            <person name="Bruels T."/>
            <person name="Jaillon O."/>
            <person name="Friedlander L."/>
            <person name="Samson G."/>
            <person name="Brottier P."/>
            <person name="Cure S."/>
            <person name="Segurens B."/>
            <person name="Aniere F."/>
            <person name="Samain S."/>
            <person name="Crespeau H."/>
            <person name="Abbasi N."/>
            <person name="Aiach N."/>
            <person name="Boscus D."/>
            <person name="Dickhoff R."/>
            <person name="Dors M."/>
            <person name="Dubois I."/>
            <person name="Friedman C."/>
            <person name="Gouyvenoux M."/>
            <person name="James R."/>
            <person name="Madan A."/>
            <person name="Mairey-Estrada B."/>
            <person name="Mangenot S."/>
            <person name="Martins N."/>
            <person name="Menard M."/>
            <person name="Oztas S."/>
            <person name="Ratcliffe A."/>
            <person name="Shaffer T."/>
            <person name="Trask B."/>
            <person name="Vacherie B."/>
            <person name="Bellemere C."/>
            <person name="Belser C."/>
            <person name="Besnard-Gonnet M."/>
            <person name="Bartol-Mavel D."/>
            <person name="Boutard M."/>
            <person name="Briez-Silla S."/>
            <person name="Combette S."/>
            <person name="Dufosse-Laurent V."/>
            <person name="Ferron C."/>
            <person name="Lechaplais C."/>
            <person name="Louesse C."/>
            <person name="Muselet D."/>
            <person name="Magdelenat G."/>
            <person name="Pateau E."/>
            <person name="Petit E."/>
            <person name="Sirvain-Trukniewicz P."/>
            <person name="Trybou A."/>
            <person name="Vega-Czarny N."/>
            <person name="Bataille E."/>
            <person name="Bluet E."/>
            <person name="Bordelais I."/>
            <person name="Dubois M."/>
            <person name="Dumont C."/>
            <person name="Guerin T."/>
            <person name="Haffray S."/>
            <person name="Hammadi R."/>
            <person name="Muanga J."/>
            <person name="Pellouin V."/>
            <person name="Robert D."/>
            <person name="Wunderle E."/>
            <person name="Gauguet G."/>
            <person name="Roy A."/>
            <person name="Sainte-Marthe L."/>
            <person name="Verdier J."/>
            <person name="Verdier-Discala C."/>
            <person name="Hillier L.W."/>
            <person name="Fulton L."/>
            <person name="McPherson J."/>
            <person name="Matsuda F."/>
            <person name="Wilson R."/>
            <person name="Scarpelli C."/>
            <person name="Gyapay G."/>
            <person name="Wincker P."/>
            <person name="Saurin W."/>
            <person name="Quetier F."/>
            <person name="Waterston R."/>
            <person name="Hood L."/>
            <person name="Weissenbach J."/>
        </authorList>
    </citation>
    <scope>NUCLEOTIDE SEQUENCE [LARGE SCALE GENOMIC DNA]</scope>
</reference>
<reference key="7">
    <citation type="submission" date="2005-07" db="EMBL/GenBank/DDBJ databases">
        <authorList>
            <person name="Mural R.J."/>
            <person name="Istrail S."/>
            <person name="Sutton G.G."/>
            <person name="Florea L."/>
            <person name="Halpern A.L."/>
            <person name="Mobarry C.M."/>
            <person name="Lippert R."/>
            <person name="Walenz B."/>
            <person name="Shatkay H."/>
            <person name="Dew I."/>
            <person name="Miller J.R."/>
            <person name="Flanigan M.J."/>
            <person name="Edwards N.J."/>
            <person name="Bolanos R."/>
            <person name="Fasulo D."/>
            <person name="Halldorsson B.V."/>
            <person name="Hannenhalli S."/>
            <person name="Turner R."/>
            <person name="Yooseph S."/>
            <person name="Lu F."/>
            <person name="Nusskern D.R."/>
            <person name="Shue B.C."/>
            <person name="Zheng X.H."/>
            <person name="Zhong F."/>
            <person name="Delcher A.L."/>
            <person name="Huson D.H."/>
            <person name="Kravitz S.A."/>
            <person name="Mouchard L."/>
            <person name="Reinert K."/>
            <person name="Remington K.A."/>
            <person name="Clark A.G."/>
            <person name="Waterman M.S."/>
            <person name="Eichler E.E."/>
            <person name="Adams M.D."/>
            <person name="Hunkapiller M.W."/>
            <person name="Myers E.W."/>
            <person name="Venter J.C."/>
        </authorList>
    </citation>
    <scope>NUCLEOTIDE SEQUENCE [LARGE SCALE GENOMIC DNA]</scope>
</reference>
<reference key="8">
    <citation type="journal article" date="2004" name="Genome Res.">
        <title>The status, quality, and expansion of the NIH full-length cDNA project: the Mammalian Gene Collection (MGC).</title>
        <authorList>
            <consortium name="The MGC Project Team"/>
        </authorList>
    </citation>
    <scope>NUCLEOTIDE SEQUENCE [LARGE SCALE MRNA] (ISOFORMS 1 AND 2)</scope>
    <scope>VARIANTS THR-94 AND ALA-133</scope>
    <source>
        <tissue>Placenta</tissue>
    </source>
</reference>
<sequence length="571" mass="63906">MRALRDRAGLLLCVLLLAALLEAALGLPVKKPRLRGPRPGSLTRLAEVSASPDPRPLKEEEEAPLLPRTHLQAEPHQHGCWTVTEPAAMTPGNATPPRTPEVTPLRLELQKLPGLANTTLSTPNPDTQASASPDPRPLREEEEARLLPRTHLQAELHQHGCWTVTEPAALTPGNATPPRTQEVTPLLLELQKLPELVHATLSTPNPDNQVTIKVVEDPQAEVSIDLLAEPSNPPPQDTLSWLPALWSFLWGDYKGEEKDRAPGEKGEEKEEDEDYPSEDIEGEDQEDKEEDEEEQALWFNGTTDNWDQGWLAPGDWVFKDSVSYDYEPQKEWSPWSPCSGNCSTGKQQRTRPCGYGCTATETRTCDLPSCPGTEDKDTLGLPSEEWKLLARNATDMHDQDVDSCEKWLNCKSDFLIKYLSQMLRDLPSCPCAYPLEAMDSPVSLQDEHQGRSFRWRDASGPRERLDIYQPTARFCLRSMLSGESSTLAAQHCCYDEDSRLLTRGKGAGMPNLISTDFSPKLHFKFDTTPWILCKGDWSRLHAVLPPNNGRACTDNPLEEEYLAQLQEAKEY</sequence>
<evidence type="ECO:0000255" key="1"/>
<evidence type="ECO:0000255" key="2">
    <source>
        <dbReference type="PROSITE-ProRule" id="PRU00210"/>
    </source>
</evidence>
<evidence type="ECO:0000255" key="3">
    <source>
        <dbReference type="PROSITE-ProRule" id="PRU00347"/>
    </source>
</evidence>
<evidence type="ECO:0000256" key="4">
    <source>
        <dbReference type="SAM" id="MobiDB-lite"/>
    </source>
</evidence>
<evidence type="ECO:0000269" key="5">
    <source>
    </source>
</evidence>
<evidence type="ECO:0000269" key="6">
    <source>
    </source>
</evidence>
<evidence type="ECO:0000269" key="7">
    <source>
    </source>
</evidence>
<evidence type="ECO:0000269" key="8">
    <source>
    </source>
</evidence>
<evidence type="ECO:0000269" key="9">
    <source>
    </source>
</evidence>
<evidence type="ECO:0000303" key="10">
    <source>
    </source>
</evidence>
<evidence type="ECO:0000303" key="11">
    <source>
    </source>
</evidence>
<evidence type="ECO:0000303" key="12">
    <source ref="2"/>
</evidence>
<evidence type="ECO:0000305" key="13"/>
<keyword id="KW-0025">Alternative splicing</keyword>
<keyword id="KW-1015">Disulfide bond</keyword>
<keyword id="KW-0325">Glycoprotein</keyword>
<keyword id="KW-1267">Proteomics identification</keyword>
<keyword id="KW-1185">Reference proteome</keyword>
<keyword id="KW-0964">Secreted</keyword>
<keyword id="KW-0732">Signal</keyword>
<gene>
    <name type="primary">ISM2</name>
    <name type="synonym">TAIL1</name>
    <name type="synonym">THSD3</name>
    <name type="ORF">PSEC0137</name>
</gene>
<protein>
    <recommendedName>
        <fullName>Isthmin-2</fullName>
    </recommendedName>
    <alternativeName>
        <fullName>Thrombospondin and AMOP domain-containing isthmin-like protein 1</fullName>
    </alternativeName>
    <alternativeName>
        <fullName>Thrombospondin type-1 domain-containing protein 3</fullName>
    </alternativeName>
</protein>
<organism>
    <name type="scientific">Homo sapiens</name>
    <name type="common">Human</name>
    <dbReference type="NCBI Taxonomy" id="9606"/>
    <lineage>
        <taxon>Eukaryota</taxon>
        <taxon>Metazoa</taxon>
        <taxon>Chordata</taxon>
        <taxon>Craniata</taxon>
        <taxon>Vertebrata</taxon>
        <taxon>Euteleostomi</taxon>
        <taxon>Mammalia</taxon>
        <taxon>Eutheria</taxon>
        <taxon>Euarchontoglires</taxon>
        <taxon>Primates</taxon>
        <taxon>Haplorrhini</taxon>
        <taxon>Catarrhini</taxon>
        <taxon>Hominidae</taxon>
        <taxon>Homo</taxon>
    </lineage>
</organism>
<accession>Q6H9L7</accession>
<accession>A8K6D5</accession>
<accession>O95432</accession>
<accession>Q495U5</accession>
<accession>Q68CN3</accession>
<accession>Q86TQ7</accession>
<accession>Q86TW3</accession>
<accession>Q86TW4</accession>
<accession>Q8N501</accession>
<accession>Q8NBL0</accession>
<proteinExistence type="evidence at protein level"/>
<name>ISM2_HUMAN</name>
<comment type="interaction">
    <interactant intactId="EBI-17249161">
        <id>Q6H9L7</id>
    </interactant>
    <interactant intactId="EBI-17247926">
        <id>Q9NY72</id>
        <label>SCN3B</label>
    </interactant>
    <organismsDiffer>false</organismsDiffer>
    <experiments>3</experiments>
</comment>
<comment type="subcellular location">
    <subcellularLocation>
        <location evidence="13">Secreted</location>
    </subcellularLocation>
</comment>
<comment type="alternative products">
    <event type="alternative splicing"/>
    <isoform>
        <id>Q6H9L7-1</id>
        <name>1</name>
        <sequence type="displayed"/>
    </isoform>
    <isoform>
        <id>Q6H9L7-2</id>
        <name>2</name>
        <sequence type="described" ref="VSP_028610 VSP_028611"/>
    </isoform>
    <isoform>
        <id>Q6H9L7-3</id>
        <name>3</name>
        <sequence type="described" ref="VSP_028612"/>
    </isoform>
    <isoform>
        <id>Q6H9L7-4</id>
        <name>4</name>
        <sequence type="described" ref="VSP_029679 VSP_029680"/>
    </isoform>
    <isoform>
        <id>Q6H9L7-5</id>
        <name>5</name>
        <sequence type="described" ref="VSP_029681"/>
    </isoform>
</comment>
<comment type="tissue specificity">
    <text evidence="6">Expressed at high levels in the placenta and at moderate levels in the pancreas, kidney, heart, liver, lung, brain and skeletal muscle.</text>
</comment>
<comment type="similarity">
    <text evidence="13">Belongs to the isthmin family.</text>
</comment>
<comment type="sequence caution" evidence="13">
    <conflict type="erroneous gene model prediction">
        <sequence resource="EMBL-CDS" id="AAD09622"/>
    </conflict>
</comment>
<comment type="sequence caution" evidence="13">
    <conflict type="erroneous initiation">
        <sequence resource="EMBL-CDS" id="CAD62605"/>
    </conflict>
</comment>
<comment type="sequence caution" evidence="13">
    <conflict type="erroneous initiation">
        <sequence resource="EMBL-CDS" id="CAD66577"/>
    </conflict>
</comment>
<comment type="sequence caution" evidence="13">
    <conflict type="erroneous gene model prediction">
        <sequence resource="EMBL-CDS" id="EAW81296"/>
    </conflict>
</comment>
<feature type="signal peptide" evidence="1">
    <location>
        <begin position="1"/>
        <end position="26"/>
    </location>
</feature>
<feature type="chain" id="PRO_5000072090" description="Isthmin-2">
    <location>
        <begin position="27"/>
        <end position="571"/>
    </location>
</feature>
<feature type="domain" description="TSP type-1" evidence="2">
    <location>
        <begin position="327"/>
        <end position="371"/>
    </location>
</feature>
<feature type="domain" description="AMOP" evidence="3">
    <location>
        <begin position="396"/>
        <end position="559"/>
    </location>
</feature>
<feature type="region of interest" description="Disordered" evidence="4">
    <location>
        <begin position="30"/>
        <end position="60"/>
    </location>
</feature>
<feature type="region of interest" description="Disordered" evidence="4">
    <location>
        <begin position="116"/>
        <end position="141"/>
    </location>
</feature>
<feature type="region of interest" description="Disordered" evidence="4">
    <location>
        <begin position="257"/>
        <end position="294"/>
    </location>
</feature>
<feature type="compositionally biased region" description="Polar residues" evidence="4">
    <location>
        <begin position="116"/>
        <end position="131"/>
    </location>
</feature>
<feature type="compositionally biased region" description="Basic and acidic residues" evidence="4">
    <location>
        <begin position="257"/>
        <end position="268"/>
    </location>
</feature>
<feature type="compositionally biased region" description="Acidic residues" evidence="4">
    <location>
        <begin position="269"/>
        <end position="294"/>
    </location>
</feature>
<feature type="glycosylation site" description="N-linked (GlcNAc...) asparagine" evidence="1">
    <location>
        <position position="117"/>
    </location>
</feature>
<feature type="glycosylation site" description="N-linked (GlcNAc...) asparagine" evidence="1">
    <location>
        <position position="300"/>
    </location>
</feature>
<feature type="glycosylation site" description="N-linked (GlcNAc...) asparagine" evidence="1">
    <location>
        <position position="392"/>
    </location>
</feature>
<feature type="disulfide bond" evidence="2">
    <location>
        <begin position="338"/>
        <end position="365"/>
    </location>
</feature>
<feature type="disulfide bond" evidence="2">
    <location>
        <begin position="342"/>
        <end position="370"/>
    </location>
</feature>
<feature type="disulfide bond" evidence="2">
    <location>
        <begin position="353"/>
        <end position="357"/>
    </location>
</feature>
<feature type="splice variant" id="VSP_028612" description="In isoform 3." evidence="10">
    <location>
        <begin position="48"/>
        <end position="128"/>
    </location>
</feature>
<feature type="splice variant" id="VSP_029679" description="In isoform 4." evidence="10">
    <original>VSASPDPRPLKEEEEAPLLPRTHLQAEPH</original>
    <variation>PPFQVRASSERSPAGARNLALCGVAGQGR</variation>
    <location>
        <begin position="48"/>
        <end position="76"/>
    </location>
</feature>
<feature type="splice variant" id="VSP_029680" description="In isoform 4." evidence="10">
    <location>
        <begin position="77"/>
        <end position="571"/>
    </location>
</feature>
<feature type="splice variant" id="VSP_029681" description="In isoform 5." evidence="10">
    <location>
        <begin position="129"/>
        <end position="209"/>
    </location>
</feature>
<feature type="splice variant" id="VSP_028610" description="In isoform 2." evidence="11 12">
    <original>VTIKVVEDPQAEVSIDLLAEPSNPPPQDTLSWLPALWSFLWGDYKGEEKDRAPGEKGEEKEEDEDYPSEDIEGEDQEDKEEDE</original>
    <variation>TMSLRRSGVPGLPAVGTAALASSRGLGPVAMAALPPRPVPVTCPPVLALRTRTPWASPVRSGSSWPAMLRTCMIKMWTAVRSG</variation>
    <location>
        <begin position="210"/>
        <end position="292"/>
    </location>
</feature>
<feature type="splice variant" id="VSP_028611" description="In isoform 2." evidence="11 12">
    <location>
        <begin position="293"/>
        <end position="571"/>
    </location>
</feature>
<feature type="sequence variant" id="VAR_035365" description="In dbSNP:rs3742728." evidence="5 7 8 9">
    <original>A</original>
    <variation>T</variation>
    <location>
        <position position="94"/>
    </location>
</feature>
<feature type="sequence variant" id="VAR_035366" description="In dbSNP:rs11850175." evidence="7">
    <original>P</original>
    <variation>A</variation>
    <location>
        <position position="133"/>
    </location>
</feature>
<feature type="sequence conflict" description="In Ref. 3; BAC11626." evidence="13" ref="3">
    <original>N</original>
    <variation>S</variation>
    <location>
        <position position="117"/>
    </location>
</feature>
<feature type="sequence conflict" description="In Ref. 3; BAC11626." evidence="13" ref="3">
    <original>S</original>
    <variation>P</variation>
    <location>
        <position position="247"/>
    </location>
</feature>
<dbReference type="EMBL" id="AJ583024">
    <property type="protein sequence ID" value="CAE47313.1"/>
    <property type="molecule type" value="mRNA"/>
</dbReference>
<dbReference type="EMBL" id="BX248277">
    <property type="protein sequence ID" value="CAD62605.1"/>
    <property type="status" value="ALT_INIT"/>
    <property type="molecule type" value="mRNA"/>
</dbReference>
<dbReference type="EMBL" id="BX248280">
    <property type="protein sequence ID" value="CAD62608.1"/>
    <property type="molecule type" value="mRNA"/>
</dbReference>
<dbReference type="EMBL" id="BX248770">
    <property type="protein sequence ID" value="CAD66577.1"/>
    <property type="status" value="ALT_INIT"/>
    <property type="molecule type" value="mRNA"/>
</dbReference>
<dbReference type="EMBL" id="AK075445">
    <property type="protein sequence ID" value="BAC11626.1"/>
    <property type="molecule type" value="mRNA"/>
</dbReference>
<dbReference type="EMBL" id="AK291600">
    <property type="protein sequence ID" value="BAF84289.1"/>
    <property type="molecule type" value="mRNA"/>
</dbReference>
<dbReference type="EMBL" id="CR749863">
    <property type="protein sequence ID" value="CAH18707.2"/>
    <property type="molecule type" value="mRNA"/>
</dbReference>
<dbReference type="EMBL" id="AF111168">
    <property type="protein sequence ID" value="AAD09622.1"/>
    <property type="status" value="ALT_SEQ"/>
    <property type="molecule type" value="Genomic_DNA"/>
</dbReference>
<dbReference type="EMBL" id="CH471061">
    <property type="protein sequence ID" value="EAW81296.1"/>
    <property type="status" value="ALT_SEQ"/>
    <property type="molecule type" value="Genomic_DNA"/>
</dbReference>
<dbReference type="EMBL" id="BC033140">
    <property type="protein sequence ID" value="AAH33140.1"/>
    <property type="molecule type" value="mRNA"/>
</dbReference>
<dbReference type="EMBL" id="BC101019">
    <property type="protein sequence ID" value="AAI01020.1"/>
    <property type="molecule type" value="mRNA"/>
</dbReference>
<dbReference type="EMBL" id="BC101020">
    <property type="protein sequence ID" value="AAI01021.1"/>
    <property type="molecule type" value="mRNA"/>
</dbReference>
<dbReference type="EMBL" id="BC101021">
    <property type="protein sequence ID" value="AAI01022.2"/>
    <property type="molecule type" value="mRNA"/>
</dbReference>
<dbReference type="EMBL" id="BC101022">
    <property type="protein sequence ID" value="AAI01023.1"/>
    <property type="molecule type" value="mRNA"/>
</dbReference>
<dbReference type="CCDS" id="CCDS45143.1">
    <molecule id="Q6H9L7-2"/>
</dbReference>
<dbReference type="CCDS" id="CCDS9864.1">
    <molecule id="Q6H9L7-1"/>
</dbReference>
<dbReference type="RefSeq" id="NP_872315.2">
    <molecule id="Q6H9L7-2"/>
    <property type="nucleotide sequence ID" value="NM_182509.3"/>
</dbReference>
<dbReference type="RefSeq" id="NP_954993.1">
    <molecule id="Q6H9L7-1"/>
    <property type="nucleotide sequence ID" value="NM_199296.3"/>
</dbReference>
<dbReference type="SMR" id="Q6H9L7"/>
<dbReference type="BioGRID" id="126919">
    <property type="interactions" value="29"/>
</dbReference>
<dbReference type="FunCoup" id="Q6H9L7">
    <property type="interactions" value="20"/>
</dbReference>
<dbReference type="IntAct" id="Q6H9L7">
    <property type="interactions" value="14"/>
</dbReference>
<dbReference type="STRING" id="9606.ENSP00000341490"/>
<dbReference type="GlyCosmos" id="Q6H9L7">
    <property type="glycosylation" value="3 sites, No reported glycans"/>
</dbReference>
<dbReference type="GlyGen" id="Q6H9L7">
    <property type="glycosylation" value="8 sites, 1 N-linked glycan (2 sites), 1 O-linked glycan (5 sites)"/>
</dbReference>
<dbReference type="iPTMnet" id="Q6H9L7"/>
<dbReference type="PhosphoSitePlus" id="Q6H9L7"/>
<dbReference type="SwissPalm" id="Q6H9L7"/>
<dbReference type="BioMuta" id="ISM2"/>
<dbReference type="DMDM" id="74724655"/>
<dbReference type="jPOST" id="Q6H9L7"/>
<dbReference type="MassIVE" id="Q6H9L7"/>
<dbReference type="PaxDb" id="9606-ENSP00000341490"/>
<dbReference type="PeptideAtlas" id="Q6H9L7"/>
<dbReference type="ProteomicsDB" id="66349">
    <molecule id="Q6H9L7-1"/>
</dbReference>
<dbReference type="ProteomicsDB" id="66351">
    <molecule id="Q6H9L7-3"/>
</dbReference>
<dbReference type="ProteomicsDB" id="66353">
    <molecule id="Q6H9L7-5"/>
</dbReference>
<dbReference type="Antibodypedia" id="26082">
    <property type="antibodies" value="44 antibodies from 17 providers"/>
</dbReference>
<dbReference type="DNASU" id="145501"/>
<dbReference type="Ensembl" id="ENST00000216481.10">
    <molecule id="Q6H9L7-4"/>
    <property type="protein sequence ID" value="ENSP00000216481.6"/>
    <property type="gene ID" value="ENSG00000100593.18"/>
</dbReference>
<dbReference type="Ensembl" id="ENST00000342219.9">
    <molecule id="Q6H9L7-1"/>
    <property type="protein sequence ID" value="ENSP00000341490.4"/>
    <property type="gene ID" value="ENSG00000100593.18"/>
</dbReference>
<dbReference type="Ensembl" id="ENST00000493585.5">
    <molecule id="Q6H9L7-2"/>
    <property type="protein sequence ID" value="ENSP00000420452.1"/>
    <property type="gene ID" value="ENSG00000100593.18"/>
</dbReference>
<dbReference type="GeneID" id="145501"/>
<dbReference type="KEGG" id="hsa:145501"/>
<dbReference type="MANE-Select" id="ENST00000342219.9">
    <property type="protein sequence ID" value="ENSP00000341490.4"/>
    <property type="RefSeq nucleotide sequence ID" value="NM_199296.3"/>
    <property type="RefSeq protein sequence ID" value="NP_954993.1"/>
</dbReference>
<dbReference type="UCSC" id="uc001xtz.4">
    <molecule id="Q6H9L7-1"/>
    <property type="organism name" value="human"/>
</dbReference>
<dbReference type="AGR" id="HGNC:23176"/>
<dbReference type="CTD" id="145501"/>
<dbReference type="DisGeNET" id="145501"/>
<dbReference type="GeneCards" id="ISM2"/>
<dbReference type="HGNC" id="HGNC:23176">
    <property type="gene designation" value="ISM2"/>
</dbReference>
<dbReference type="HPA" id="ENSG00000100593">
    <property type="expression patterns" value="Tissue enriched (placenta)"/>
</dbReference>
<dbReference type="MIM" id="612684">
    <property type="type" value="gene"/>
</dbReference>
<dbReference type="neXtProt" id="NX_Q6H9L7"/>
<dbReference type="OpenTargets" id="ENSG00000100593"/>
<dbReference type="PharmGKB" id="PA164721097"/>
<dbReference type="VEuPathDB" id="HostDB:ENSG00000100593"/>
<dbReference type="eggNOG" id="ENOG502RU1R">
    <property type="taxonomic scope" value="Eukaryota"/>
</dbReference>
<dbReference type="GeneTree" id="ENSGT00940000162809"/>
<dbReference type="HOGENOM" id="CLU_2653813_0_0_1"/>
<dbReference type="InParanoid" id="Q6H9L7"/>
<dbReference type="OMA" id="ESRACDL"/>
<dbReference type="OrthoDB" id="9930623at2759"/>
<dbReference type="PAN-GO" id="Q6H9L7">
    <property type="GO annotations" value="0 GO annotations based on evolutionary models"/>
</dbReference>
<dbReference type="PhylomeDB" id="Q6H9L7"/>
<dbReference type="TreeFam" id="TF331333"/>
<dbReference type="PathwayCommons" id="Q6H9L7"/>
<dbReference type="SignaLink" id="Q6H9L7"/>
<dbReference type="BioGRID-ORCS" id="145501">
    <property type="hits" value="2 hits in 1144 CRISPR screens"/>
</dbReference>
<dbReference type="GenomeRNAi" id="145501"/>
<dbReference type="Pharos" id="Q6H9L7">
    <property type="development level" value="Tdark"/>
</dbReference>
<dbReference type="PRO" id="PR:Q6H9L7"/>
<dbReference type="Proteomes" id="UP000005640">
    <property type="component" value="Chromosome 14"/>
</dbReference>
<dbReference type="RNAct" id="Q6H9L7">
    <property type="molecule type" value="protein"/>
</dbReference>
<dbReference type="Bgee" id="ENSG00000100593">
    <property type="expression patterns" value="Expressed in decidua and 86 other cell types or tissues"/>
</dbReference>
<dbReference type="ExpressionAtlas" id="Q6H9L7">
    <property type="expression patterns" value="baseline and differential"/>
</dbReference>
<dbReference type="GO" id="GO:0005576">
    <property type="term" value="C:extracellular region"/>
    <property type="evidence" value="ECO:0007669"/>
    <property type="project" value="UniProtKB-SubCell"/>
</dbReference>
<dbReference type="FunFam" id="2.20.100.10:FF:000033">
    <property type="entry name" value="Isthmin 1"/>
    <property type="match status" value="1"/>
</dbReference>
<dbReference type="Gene3D" id="2.20.100.10">
    <property type="entry name" value="Thrombospondin type-1 (TSP1) repeat"/>
    <property type="match status" value="1"/>
</dbReference>
<dbReference type="InterPro" id="IPR005533">
    <property type="entry name" value="AMOP_dom"/>
</dbReference>
<dbReference type="InterPro" id="IPR051867">
    <property type="entry name" value="Angio_Inhib/Adhesion_GPCR"/>
</dbReference>
<dbReference type="InterPro" id="IPR000884">
    <property type="entry name" value="TSP1_rpt"/>
</dbReference>
<dbReference type="InterPro" id="IPR036383">
    <property type="entry name" value="TSP1_rpt_sf"/>
</dbReference>
<dbReference type="PANTHER" id="PTHR10239">
    <property type="entry name" value="ISTHMIN-2"/>
    <property type="match status" value="1"/>
</dbReference>
<dbReference type="PANTHER" id="PTHR10239:SF28">
    <property type="entry name" value="ISTHMIN-2"/>
    <property type="match status" value="1"/>
</dbReference>
<dbReference type="Pfam" id="PF03782">
    <property type="entry name" value="AMOP"/>
    <property type="match status" value="1"/>
</dbReference>
<dbReference type="Pfam" id="PF00090">
    <property type="entry name" value="TSP_1"/>
    <property type="match status" value="1"/>
</dbReference>
<dbReference type="SMART" id="SM00723">
    <property type="entry name" value="AMOP"/>
    <property type="match status" value="1"/>
</dbReference>
<dbReference type="SMART" id="SM00209">
    <property type="entry name" value="TSP1"/>
    <property type="match status" value="1"/>
</dbReference>
<dbReference type="SUPFAM" id="SSF82895">
    <property type="entry name" value="TSP-1 type 1 repeat"/>
    <property type="match status" value="1"/>
</dbReference>
<dbReference type="PROSITE" id="PS50856">
    <property type="entry name" value="AMOP"/>
    <property type="match status" value="1"/>
</dbReference>
<dbReference type="PROSITE" id="PS50092">
    <property type="entry name" value="TSP1"/>
    <property type="match status" value="1"/>
</dbReference>